<accession>P13840</accession>
<keyword id="KW-0547">Nucleotide-binding</keyword>
<keyword id="KW-0548">Nucleotidyltransferase</keyword>
<keyword id="KW-1185">Reference proteome</keyword>
<keyword id="KW-0696">RNA-directed RNA polymerase</keyword>
<keyword id="KW-0808">Transferase</keyword>
<keyword id="KW-0693">Viral RNA replication</keyword>
<sequence>MVAITVQGAQLIKRVVERFYPGIAFDINEGACYIYKFSDHIRRIRMKHGTKYRRQAEEIMRSISLRKERLYGIPVLDEVEWKYVFDGQTFQSYAFEVYVNSILPWSELDPEEEFLRNYRVSRETTEVEKFIEFRAKNEMQIYGDIPIKVWCCFINELSIELNPIPLGMQVMADFVNRFNSPFHQGNRDLSNLEDFQVAYTTPLLFEMCCMESILEFNIKMRMREEDISALEFGDIKIDPVGLLREFFILCLPHPKKINNVLRAPYSWFVKMWGVGADPIVVLQSTAGDDRNSKDVFYDKFRTEPNRYKALFRSSFYNESRRMNEEKILEAVKYSQNLGSHDRRLPLFEKMLKMVYTTPFYPHKSSNMILASFLLSIQTITGYGRAWVKNVSTEFDKQLKPNPSNLVRDVSDLTREFFKQAYVEAKERREEMVKPEDLYTSMLRLARNTSSGFSTEIYVKKRFGPRLRDKDLVKINSRIKALVIFTKGHTVFTDEELHKKYNSVELYQTKGSRDVPIKATRTIYSINLSVLVPQLIVTLPLNEYFSRVGGITRPDYKKIGGKVIVGDLEATGSRVMDAADCFRNSADRDIFTIAIDYSEYDTHLTRHNFRTGMLQGIREAMAPYRALRYEGYTLEQIIDFGYGEGRVANTLWNGKRRLFKTTFDAYIRLDESERDKGSFKVPKGVLPVSSVDVANRIAVDKGFDTLIAATDGSDLALIDTHLSGENSTLIANSMHNMAIGTLIQRAVGREQPGILTFLSEQYVGDDTLFYTKLHTTDITVFDKVAASIFDTVAKCGHEASPSKTMMTPYSVEKTQTHAKQGCYVPQDRMMIISSERRKDIEDVQGYVRSQVQTMITKVSRGFCHDLAQLILMLKTTFIGAWKMKRTIKENAMYRDRKFDSNDEDGFTLIQIRNPLALYVPIGWNGYGAHPAALNIVMTEEMYVDSIMISKLDEIMAPIRRIVHDIPPCWNETQGDKRGLISATKLSFFSKMARPAVQAALSDPQIMNLVEELPLGEFSPGRISRTMMHSALLKESSAKALLSSGYRLEYQKALNGWIAQVSMRLGEESGVISTSYAKLFDVYFEGELDGAPYMFPDQNLSPQFYIQKMMIGPRVSSRVRNSYVDRIDVILRKDVVMRGFITANTILNVIEKLGTNHSVGDLVTVFTLMNIETRVAEELAEYMTSEKIRFDALKLLKKGIAGDEFTMSLNVATQDFIDTYLAYPYQLTKTEVDAISLYCTQMVMLRAALGLPKKKMKIVVTDDAKKRYKIRLQRFRTHVPKIKVLKKLIDPNRMTVRNLENQFV</sequence>
<comment type="catalytic activity">
    <reaction evidence="1">
        <text>RNA(n) + a ribonucleoside 5'-triphosphate = RNA(n+1) + diphosphate</text>
        <dbReference type="Rhea" id="RHEA:21248"/>
        <dbReference type="Rhea" id="RHEA-COMP:14527"/>
        <dbReference type="Rhea" id="RHEA-COMP:17342"/>
        <dbReference type="ChEBI" id="CHEBI:33019"/>
        <dbReference type="ChEBI" id="CHEBI:61557"/>
        <dbReference type="ChEBI" id="CHEBI:140395"/>
        <dbReference type="EC" id="2.7.7.48"/>
    </reaction>
</comment>
<comment type="similarity">
    <text evidence="2">Belongs to the reoviridae RNA-directed RNA polymerase family.</text>
</comment>
<name>RDRP_BTV10</name>
<protein>
    <recommendedName>
        <fullName>RNA-directed RNA polymerase</fullName>
        <ecNumber>2.7.7.48</ecNumber>
    </recommendedName>
    <alternativeName>
        <fullName>VP1</fullName>
    </alternativeName>
</protein>
<proteinExistence type="inferred from homology"/>
<reference key="1">
    <citation type="journal article" date="1988" name="Nucleic Acids Res.">
        <title>Evidence for genetic relationship between RNA and DNA viruses from the sequence homology of a putative polymerase gene of bluetongue virus with that of vaccinia virus: conservation of RNA polymerase genes from diverse species.</title>
        <authorList>
            <person name="Roy P."/>
            <person name="Fukusho A."/>
            <person name="Ritter G.D."/>
            <person name="Lyon D."/>
        </authorList>
    </citation>
    <scope>NUCLEOTIDE SEQUENCE [GENOMIC RNA]</scope>
</reference>
<evidence type="ECO:0000255" key="1">
    <source>
        <dbReference type="PROSITE-ProRule" id="PRU00539"/>
    </source>
</evidence>
<evidence type="ECO:0000305" key="2"/>
<organismHost>
    <name type="scientific">Antilocapra americana</name>
    <name type="common">Pronghorn</name>
    <dbReference type="NCBI Taxonomy" id="9891"/>
</organismHost>
<organismHost>
    <name type="scientific">Bos taurus</name>
    <name type="common">Bovine</name>
    <dbReference type="NCBI Taxonomy" id="9913"/>
</organismHost>
<organismHost>
    <name type="scientific">Capra hircus</name>
    <name type="common">Goat</name>
    <dbReference type="NCBI Taxonomy" id="9925"/>
</organismHost>
<organismHost>
    <name type="scientific">Culicoides variipennis</name>
    <name type="common">Biting midge</name>
    <dbReference type="NCBI Taxonomy" id="46212"/>
</organismHost>
<organismHost>
    <name type="scientific">Ovis aries</name>
    <name type="common">Sheep</name>
    <dbReference type="NCBI Taxonomy" id="9940"/>
</organismHost>
<gene>
    <name type="primary">Segment-1</name>
</gene>
<feature type="chain" id="PRO_0000222660" description="RNA-directed RNA polymerase">
    <location>
        <begin position="1"/>
        <end position="1302"/>
    </location>
</feature>
<feature type="domain" description="RdRp catalytic" evidence="1">
    <location>
        <begin position="562"/>
        <end position="823"/>
    </location>
</feature>
<dbReference type="EC" id="2.7.7.48"/>
<dbReference type="EMBL" id="X12819">
    <property type="protein sequence ID" value="CAA31306.1"/>
    <property type="molecule type" value="Genomic_RNA"/>
</dbReference>
<dbReference type="PIR" id="A34296">
    <property type="entry name" value="RRXRBT"/>
</dbReference>
<dbReference type="RefSeq" id="YP_052968.1">
    <property type="nucleotide sequence ID" value="NC_006023.1"/>
</dbReference>
<dbReference type="SMR" id="P13840"/>
<dbReference type="KEGG" id="vg:2943156"/>
<dbReference type="Proteomes" id="UP000007662">
    <property type="component" value="Genome"/>
</dbReference>
<dbReference type="GO" id="GO:0000166">
    <property type="term" value="F:nucleotide binding"/>
    <property type="evidence" value="ECO:0007669"/>
    <property type="project" value="UniProtKB-KW"/>
</dbReference>
<dbReference type="GO" id="GO:0003723">
    <property type="term" value="F:RNA binding"/>
    <property type="evidence" value="ECO:0007669"/>
    <property type="project" value="InterPro"/>
</dbReference>
<dbReference type="GO" id="GO:0003968">
    <property type="term" value="F:RNA-directed RNA polymerase activity"/>
    <property type="evidence" value="ECO:0007669"/>
    <property type="project" value="UniProtKB-KW"/>
</dbReference>
<dbReference type="GO" id="GO:0006351">
    <property type="term" value="P:DNA-templated transcription"/>
    <property type="evidence" value="ECO:0007669"/>
    <property type="project" value="InterPro"/>
</dbReference>
<dbReference type="GO" id="GO:0019079">
    <property type="term" value="P:viral genome replication"/>
    <property type="evidence" value="ECO:0007669"/>
    <property type="project" value="InterPro"/>
</dbReference>
<dbReference type="InterPro" id="IPR043502">
    <property type="entry name" value="DNA/RNA_pol_sf"/>
</dbReference>
<dbReference type="InterPro" id="IPR007097">
    <property type="entry name" value="RNA-dir_pol_reovirus"/>
</dbReference>
<dbReference type="InterPro" id="IPR008723">
    <property type="entry name" value="RNA_pol_orbivir"/>
</dbReference>
<dbReference type="Pfam" id="PF05788">
    <property type="entry name" value="Orbi_VP1"/>
    <property type="match status" value="1"/>
</dbReference>
<dbReference type="PIRSF" id="PIRSF000821">
    <property type="entry name" value="RdRPol"/>
    <property type="match status" value="1"/>
</dbReference>
<dbReference type="SUPFAM" id="SSF56672">
    <property type="entry name" value="DNA/RNA polymerases"/>
    <property type="match status" value="1"/>
</dbReference>
<dbReference type="PROSITE" id="PS50523">
    <property type="entry name" value="RDRP_DSRNA_REO"/>
    <property type="match status" value="1"/>
</dbReference>
<organism>
    <name type="scientific">Bluetongue virus 10 (isolate USA)</name>
    <name type="common">BTV 10</name>
    <dbReference type="NCBI Taxonomy" id="10900"/>
    <lineage>
        <taxon>Viruses</taxon>
        <taxon>Riboviria</taxon>
        <taxon>Orthornavirae</taxon>
        <taxon>Duplornaviricota</taxon>
        <taxon>Resentoviricetes</taxon>
        <taxon>Reovirales</taxon>
        <taxon>Sedoreoviridae</taxon>
        <taxon>Orbivirus</taxon>
        <taxon>Bluetongue virus</taxon>
    </lineage>
</organism>